<accession>Q9X725</accession>
<organism>
    <name type="scientific">Dickeya chrysanthemi</name>
    <name type="common">Pectobacterium chrysanthemi</name>
    <name type="synonym">Erwinia chrysanthemi</name>
    <dbReference type="NCBI Taxonomy" id="556"/>
    <lineage>
        <taxon>Bacteria</taxon>
        <taxon>Pseudomonadati</taxon>
        <taxon>Pseudomonadota</taxon>
        <taxon>Gammaproteobacteria</taxon>
        <taxon>Enterobacterales</taxon>
        <taxon>Pectobacteriaceae</taxon>
        <taxon>Dickeya</taxon>
    </lineage>
</organism>
<reference key="1">
    <citation type="submission" date="1998-04" db="EMBL/GenBank/DDBJ databases">
        <title>OxyR mutants of Erwinia chrysanthemi are hypersensitive to H2O2 but retain full virulence in potato tuber.</title>
        <authorList>
            <person name="Miguel E."/>
            <person name="Poza-Carrion C."/>
            <person name="Lopez-Solanilla E."/>
            <person name="Garcia-Olmedo F."/>
            <person name="Rodriguez-Palenzuela P."/>
        </authorList>
    </citation>
    <scope>NUCLEOTIDE SEQUENCE [GENOMIC DNA]</scope>
    <source>
        <strain>EC16</strain>
    </source>
</reference>
<feature type="chain" id="PRO_0000105732" description="Hydrogen peroxide-inducible genes activator">
    <location>
        <begin position="1"/>
        <end position="305"/>
    </location>
</feature>
<feature type="domain" description="HTH lysR-type" evidence="2">
    <location>
        <begin position="1"/>
        <end position="58"/>
    </location>
</feature>
<feature type="DNA-binding region" description="H-T-H motif" evidence="2">
    <location>
        <begin position="18"/>
        <end position="37"/>
    </location>
</feature>
<protein>
    <recommendedName>
        <fullName>Hydrogen peroxide-inducible genes activator</fullName>
    </recommendedName>
</protein>
<sequence>MNIRDLEYLVALAEHRHFRRAADSCHVSQPTLSGQIRKLEDELGVMLLERTSRKVLFTQAGLLLVEQARTVLREVKVLKEMASQQGEAMSGPLHIGLIPTVGPYLLPQIIPMLHRAFPKLEMYLHEAQTHQLLAQLDSGKLDCAILAMVKESEAFIEVPLFDEPMKLAIYQDHPWANRERVAMSDLSGEKLLMLEDGHCLRDQAMGFCFQAGADEDTHFRATSLETLRNMVAAGSGITLLPSLAVPQERIRDGVCYLPCYKPEPKRTIALVYRPGSPLRGRYEQLADSVREHMQLHMEKLSAQSA</sequence>
<comment type="function">
    <text evidence="1">Required for the induction of a regulon of hydrogen peroxide inducible genes such as catalase and glutathione-reductase.</text>
</comment>
<comment type="similarity">
    <text evidence="3">Belongs to the LysR transcriptional regulatory family.</text>
</comment>
<gene>
    <name type="primary">oxyR</name>
</gene>
<name>OXYR_DICCH</name>
<evidence type="ECO:0000250" key="1"/>
<evidence type="ECO:0000255" key="2">
    <source>
        <dbReference type="PROSITE-ProRule" id="PRU00253"/>
    </source>
</evidence>
<evidence type="ECO:0000305" key="3"/>
<dbReference type="EMBL" id="AJ005255">
    <property type="protein sequence ID" value="CAB40388.1"/>
    <property type="molecule type" value="Genomic_DNA"/>
</dbReference>
<dbReference type="RefSeq" id="WP_039999062.1">
    <property type="nucleotide sequence ID" value="NZ_JBBBQI010000007.1"/>
</dbReference>
<dbReference type="SMR" id="Q9X725"/>
<dbReference type="GO" id="GO:0032993">
    <property type="term" value="C:protein-DNA complex"/>
    <property type="evidence" value="ECO:0007669"/>
    <property type="project" value="TreeGrafter"/>
</dbReference>
<dbReference type="GO" id="GO:0003677">
    <property type="term" value="F:DNA binding"/>
    <property type="evidence" value="ECO:0007669"/>
    <property type="project" value="UniProtKB-KW"/>
</dbReference>
<dbReference type="GO" id="GO:0003700">
    <property type="term" value="F:DNA-binding transcription factor activity"/>
    <property type="evidence" value="ECO:0007669"/>
    <property type="project" value="InterPro"/>
</dbReference>
<dbReference type="CDD" id="cd08411">
    <property type="entry name" value="PBP2_OxyR"/>
    <property type="match status" value="1"/>
</dbReference>
<dbReference type="FunFam" id="3.40.190.10:FF:000027">
    <property type="entry name" value="DNA-binding transcriptional regulator OxyR"/>
    <property type="match status" value="1"/>
</dbReference>
<dbReference type="FunFam" id="1.10.10.10:FF:000001">
    <property type="entry name" value="LysR family transcriptional regulator"/>
    <property type="match status" value="1"/>
</dbReference>
<dbReference type="Gene3D" id="3.40.190.10">
    <property type="entry name" value="Periplasmic binding protein-like II"/>
    <property type="match status" value="2"/>
</dbReference>
<dbReference type="Gene3D" id="1.10.10.10">
    <property type="entry name" value="Winged helix-like DNA-binding domain superfamily/Winged helix DNA-binding domain"/>
    <property type="match status" value="1"/>
</dbReference>
<dbReference type="InterPro" id="IPR005119">
    <property type="entry name" value="LysR_subst-bd"/>
</dbReference>
<dbReference type="InterPro" id="IPR000847">
    <property type="entry name" value="Tscrpt_reg_HTH_LysR"/>
</dbReference>
<dbReference type="InterPro" id="IPR036388">
    <property type="entry name" value="WH-like_DNA-bd_sf"/>
</dbReference>
<dbReference type="InterPro" id="IPR036390">
    <property type="entry name" value="WH_DNA-bd_sf"/>
</dbReference>
<dbReference type="NCBIfam" id="NF008361">
    <property type="entry name" value="PRK11151.1"/>
    <property type="match status" value="1"/>
</dbReference>
<dbReference type="PANTHER" id="PTHR30346:SF26">
    <property type="entry name" value="HYDROGEN PEROXIDE-INDUCIBLE GENES ACTIVATOR"/>
    <property type="match status" value="1"/>
</dbReference>
<dbReference type="PANTHER" id="PTHR30346">
    <property type="entry name" value="TRANSCRIPTIONAL DUAL REGULATOR HCAR-RELATED"/>
    <property type="match status" value="1"/>
</dbReference>
<dbReference type="Pfam" id="PF00126">
    <property type="entry name" value="HTH_1"/>
    <property type="match status" value="1"/>
</dbReference>
<dbReference type="Pfam" id="PF03466">
    <property type="entry name" value="LysR_substrate"/>
    <property type="match status" value="1"/>
</dbReference>
<dbReference type="PRINTS" id="PR00039">
    <property type="entry name" value="HTHLYSR"/>
</dbReference>
<dbReference type="SUPFAM" id="SSF53850">
    <property type="entry name" value="Periplasmic binding protein-like II"/>
    <property type="match status" value="1"/>
</dbReference>
<dbReference type="SUPFAM" id="SSF46785">
    <property type="entry name" value="Winged helix' DNA-binding domain"/>
    <property type="match status" value="1"/>
</dbReference>
<dbReference type="PROSITE" id="PS50931">
    <property type="entry name" value="HTH_LYSR"/>
    <property type="match status" value="1"/>
</dbReference>
<keyword id="KW-0010">Activator</keyword>
<keyword id="KW-0238">DNA-binding</keyword>
<keyword id="KW-0804">Transcription</keyword>
<keyword id="KW-0805">Transcription regulation</keyword>
<proteinExistence type="inferred from homology"/>